<organism>
    <name type="scientific">Cutibacterium acnes (strain DSM 16379 / KPA171202)</name>
    <name type="common">Propionibacterium acnes</name>
    <dbReference type="NCBI Taxonomy" id="267747"/>
    <lineage>
        <taxon>Bacteria</taxon>
        <taxon>Bacillati</taxon>
        <taxon>Actinomycetota</taxon>
        <taxon>Actinomycetes</taxon>
        <taxon>Propionibacteriales</taxon>
        <taxon>Propionibacteriaceae</taxon>
        <taxon>Cutibacterium</taxon>
    </lineage>
</organism>
<protein>
    <recommendedName>
        <fullName evidence="1">Na(+)/H(+) antiporter NhaA</fullName>
    </recommendedName>
    <alternativeName>
        <fullName evidence="1">Sodium/proton antiporter NhaA</fullName>
    </alternativeName>
</protein>
<reference key="1">
    <citation type="journal article" date="2004" name="Science">
        <title>The complete genome sequence of Propionibacterium acnes, a commensal of human skin.</title>
        <authorList>
            <person name="Brueggemann H."/>
            <person name="Henne A."/>
            <person name="Hoster F."/>
            <person name="Liesegang H."/>
            <person name="Wiezer A."/>
            <person name="Strittmatter A."/>
            <person name="Hujer S."/>
            <person name="Duerre P."/>
            <person name="Gottschalk G."/>
        </authorList>
    </citation>
    <scope>NUCLEOTIDE SEQUENCE [LARGE SCALE GENOMIC DNA]</scope>
    <source>
        <strain>DSM 16379 / KPA171202</strain>
    </source>
</reference>
<accession>Q6AB77</accession>
<comment type="function">
    <text evidence="1">Na(+)/H(+) antiporter that extrudes sodium in exchange for external protons.</text>
</comment>
<comment type="catalytic activity">
    <reaction evidence="1">
        <text>Na(+)(in) + 2 H(+)(out) = Na(+)(out) + 2 H(+)(in)</text>
        <dbReference type="Rhea" id="RHEA:29251"/>
        <dbReference type="ChEBI" id="CHEBI:15378"/>
        <dbReference type="ChEBI" id="CHEBI:29101"/>
    </reaction>
    <physiologicalReaction direction="left-to-right" evidence="1">
        <dbReference type="Rhea" id="RHEA:29252"/>
    </physiologicalReaction>
</comment>
<comment type="subcellular location">
    <subcellularLocation>
        <location evidence="1">Cell membrane</location>
        <topology evidence="1">Multi-pass membrane protein</topology>
    </subcellularLocation>
</comment>
<comment type="similarity">
    <text evidence="1">Belongs to the NhaA Na(+)/H(+) (TC 2.A.33) antiporter family.</text>
</comment>
<evidence type="ECO:0000255" key="1">
    <source>
        <dbReference type="HAMAP-Rule" id="MF_01844"/>
    </source>
</evidence>
<sequence length="420" mass="45164">MTDSRKNKRPRKSILRPVTGPNALHLSDIFRNETTGGMLMLAATVAALLWANLGHHSYHFFRELALGPLTIEQWAADGLLTVFFFIAGLELKREFVEGSLSRPADALVPIVAAVCGMVFPAGIYTLFNVLASDGHPAGWAIPMATDIAFALAVLAIVGAGLPQAVRAFLLTLAIADDLGSIIVIAVFFSTGLDIWWLAGAIACIGLWGVMQHFHVDNGWWYVPIFIVGWWCMLRSGVHATIAGVAFGLLTRTEEDVLDDPVDRWQHKVEPWSAGVVVPFFALMSAGVHVSGKTFLALWTHPISLGIVCGLILGKVIGITLGSCLTARFTSAELGRGVVWRDIIAVAVLAGIGFTVSMLMTDLSFPKNHEFADEAKASVLMASFLAAILGGAMLHHRGKSHAMRQTKHSHEVPVAAGTCND</sequence>
<gene>
    <name evidence="1" type="primary">nhaA</name>
    <name type="ordered locus">PPA0227</name>
</gene>
<feature type="chain" id="PRO_0000334364" description="Na(+)/H(+) antiporter NhaA">
    <location>
        <begin position="1"/>
        <end position="420"/>
    </location>
</feature>
<feature type="transmembrane region" description="Helical" evidence="1">
    <location>
        <begin position="34"/>
        <end position="54"/>
    </location>
</feature>
<feature type="transmembrane region" description="Helical" evidence="1">
    <location>
        <begin position="69"/>
        <end position="89"/>
    </location>
</feature>
<feature type="transmembrane region" description="Helical" evidence="1">
    <location>
        <begin position="107"/>
        <end position="127"/>
    </location>
</feature>
<feature type="transmembrane region" description="Helical" evidence="1">
    <location>
        <begin position="141"/>
        <end position="161"/>
    </location>
</feature>
<feature type="transmembrane region" description="Helical" evidence="1">
    <location>
        <begin position="168"/>
        <end position="190"/>
    </location>
</feature>
<feature type="transmembrane region" description="Helical" evidence="1">
    <location>
        <begin position="194"/>
        <end position="213"/>
    </location>
</feature>
<feature type="transmembrane region" description="Helical" evidence="1">
    <location>
        <begin position="271"/>
        <end position="291"/>
    </location>
</feature>
<feature type="transmembrane region" description="Helical" evidence="1">
    <location>
        <begin position="301"/>
        <end position="321"/>
    </location>
</feature>
<feature type="transmembrane region" description="Helical" evidence="1">
    <location>
        <begin position="342"/>
        <end position="362"/>
    </location>
</feature>
<feature type="transmembrane region" description="Helical" evidence="1">
    <location>
        <begin position="374"/>
        <end position="394"/>
    </location>
</feature>
<keyword id="KW-0050">Antiport</keyword>
<keyword id="KW-1003">Cell membrane</keyword>
<keyword id="KW-0406">Ion transport</keyword>
<keyword id="KW-0472">Membrane</keyword>
<keyword id="KW-0915">Sodium</keyword>
<keyword id="KW-0739">Sodium transport</keyword>
<keyword id="KW-0812">Transmembrane</keyword>
<keyword id="KW-1133">Transmembrane helix</keyword>
<keyword id="KW-0813">Transport</keyword>
<proteinExistence type="inferred from homology"/>
<dbReference type="EMBL" id="AE017283">
    <property type="protein sequence ID" value="AAT81989.1"/>
    <property type="molecule type" value="Genomic_DNA"/>
</dbReference>
<dbReference type="RefSeq" id="WP_002524662.1">
    <property type="nucleotide sequence ID" value="NZ_CP025935.1"/>
</dbReference>
<dbReference type="SMR" id="Q6AB77"/>
<dbReference type="EnsemblBacteria" id="AAT81989">
    <property type="protein sequence ID" value="AAT81989"/>
    <property type="gene ID" value="PPA0227"/>
</dbReference>
<dbReference type="KEGG" id="pac:PPA0227"/>
<dbReference type="eggNOG" id="COG3004">
    <property type="taxonomic scope" value="Bacteria"/>
</dbReference>
<dbReference type="HOGENOM" id="CLU_015803_1_2_11"/>
<dbReference type="Proteomes" id="UP000000603">
    <property type="component" value="Chromosome"/>
</dbReference>
<dbReference type="GO" id="GO:0005886">
    <property type="term" value="C:plasma membrane"/>
    <property type="evidence" value="ECO:0007669"/>
    <property type="project" value="UniProtKB-SubCell"/>
</dbReference>
<dbReference type="GO" id="GO:0015385">
    <property type="term" value="F:sodium:proton antiporter activity"/>
    <property type="evidence" value="ECO:0007669"/>
    <property type="project" value="TreeGrafter"/>
</dbReference>
<dbReference type="GO" id="GO:0006885">
    <property type="term" value="P:regulation of pH"/>
    <property type="evidence" value="ECO:0007669"/>
    <property type="project" value="InterPro"/>
</dbReference>
<dbReference type="Gene3D" id="1.20.1530.10">
    <property type="entry name" value="Na+/H+ antiporter like domain"/>
    <property type="match status" value="1"/>
</dbReference>
<dbReference type="HAMAP" id="MF_01844">
    <property type="entry name" value="NhaA"/>
    <property type="match status" value="1"/>
</dbReference>
<dbReference type="InterPro" id="IPR023171">
    <property type="entry name" value="Na/H_antiporter_dom_sf"/>
</dbReference>
<dbReference type="InterPro" id="IPR004670">
    <property type="entry name" value="NhaA"/>
</dbReference>
<dbReference type="NCBIfam" id="TIGR00773">
    <property type="entry name" value="NhaA"/>
    <property type="match status" value="1"/>
</dbReference>
<dbReference type="PANTHER" id="PTHR30341:SF0">
    <property type="entry name" value="NA(+)_H(+) ANTIPORTER NHAA"/>
    <property type="match status" value="1"/>
</dbReference>
<dbReference type="PANTHER" id="PTHR30341">
    <property type="entry name" value="SODIUM ION/PROTON ANTIPORTER NHAA-RELATED"/>
    <property type="match status" value="1"/>
</dbReference>
<dbReference type="Pfam" id="PF06965">
    <property type="entry name" value="Na_H_antiport_1"/>
    <property type="match status" value="1"/>
</dbReference>
<name>NHAA_CUTAK</name>